<reference key="1">
    <citation type="journal article" date="1999" name="DNA Res.">
        <title>Complete genome sequence of an aerobic hyper-thermophilic crenarchaeon, Aeropyrum pernix K1.</title>
        <authorList>
            <person name="Kawarabayasi Y."/>
            <person name="Hino Y."/>
            <person name="Horikawa H."/>
            <person name="Yamazaki S."/>
            <person name="Haikawa Y."/>
            <person name="Jin-no K."/>
            <person name="Takahashi M."/>
            <person name="Sekine M."/>
            <person name="Baba S."/>
            <person name="Ankai A."/>
            <person name="Kosugi H."/>
            <person name="Hosoyama A."/>
            <person name="Fukui S."/>
            <person name="Nagai Y."/>
            <person name="Nishijima K."/>
            <person name="Nakazawa H."/>
            <person name="Takamiya M."/>
            <person name="Masuda S."/>
            <person name="Funahashi T."/>
            <person name="Tanaka T."/>
            <person name="Kudoh Y."/>
            <person name="Yamazaki J."/>
            <person name="Kushida N."/>
            <person name="Oguchi A."/>
            <person name="Aoki K."/>
            <person name="Kubota K."/>
            <person name="Nakamura Y."/>
            <person name="Nomura N."/>
            <person name="Sako Y."/>
            <person name="Kikuchi H."/>
        </authorList>
    </citation>
    <scope>NUCLEOTIDE SEQUENCE [LARGE SCALE GENOMIC DNA]</scope>
    <source>
        <strain>ATCC 700893 / DSM 11879 / JCM 9820 / NBRC 100138 / K1</strain>
    </source>
</reference>
<protein>
    <recommendedName>
        <fullName evidence="1">DNA topoisomerase 1</fullName>
        <ecNumber evidence="1">5.6.2.1</ecNumber>
    </recommendedName>
    <alternativeName>
        <fullName evidence="1">DNA topoisomerase I</fullName>
    </alternativeName>
    <alternativeName>
        <fullName>Omega-protein</fullName>
    </alternativeName>
    <alternativeName>
        <fullName>Relaxing enzyme</fullName>
    </alternativeName>
    <alternativeName>
        <fullName>Swivelase</fullName>
    </alternativeName>
    <alternativeName>
        <fullName>Untwisting enzyme</fullName>
    </alternativeName>
</protein>
<comment type="function">
    <text evidence="1">Releases the supercoiling and torsional tension of DNA, which is introduced during the DNA replication and transcription, by transiently cleaving and rejoining one strand of the DNA duplex. Introduces a single-strand break via transesterification at a target site in duplex DNA. The scissile phosphodiester is attacked by the catalytic tyrosine of the enzyme, resulting in the formation of a DNA-(5'-phosphotyrosyl)-enzyme intermediate and the expulsion of a 3'-OH DNA strand. The free DNA strand then undergoes passage around the unbroken strand, thus removing DNA supercoils. Finally, in the religation step, the DNA 3'-OH attacks the covalent intermediate to expel the active-site tyrosine and restore the DNA phosphodiester backbone.</text>
</comment>
<comment type="catalytic activity">
    <reaction evidence="1">
        <text>ATP-independent breakage of single-stranded DNA, followed by passage and rejoining.</text>
        <dbReference type="EC" id="5.6.2.1"/>
    </reaction>
</comment>
<comment type="cofactor">
    <cofactor evidence="1">
        <name>Mg(2+)</name>
        <dbReference type="ChEBI" id="CHEBI:18420"/>
    </cofactor>
</comment>
<comment type="subunit">
    <text evidence="1">Monomer.</text>
</comment>
<comment type="similarity">
    <text evidence="1">Belongs to the type IA topoisomerase family.</text>
</comment>
<evidence type="ECO:0000255" key="1">
    <source>
        <dbReference type="HAMAP-Rule" id="MF_00952"/>
    </source>
</evidence>
<evidence type="ECO:0000255" key="2">
    <source>
        <dbReference type="PROSITE-ProRule" id="PRU01383"/>
    </source>
</evidence>
<evidence type="ECO:0000256" key="3">
    <source>
        <dbReference type="SAM" id="MobiDB-lite"/>
    </source>
</evidence>
<dbReference type="EC" id="5.6.2.1" evidence="1"/>
<dbReference type="EMBL" id="BA000002">
    <property type="protein sequence ID" value="BAA80797.1"/>
    <property type="molecule type" value="Genomic_DNA"/>
</dbReference>
<dbReference type="PIR" id="H72563">
    <property type="entry name" value="H72563"/>
</dbReference>
<dbReference type="SMR" id="Q9YB01"/>
<dbReference type="STRING" id="272557.APE_1794"/>
<dbReference type="EnsemblBacteria" id="BAA80797">
    <property type="protein sequence ID" value="BAA80797"/>
    <property type="gene ID" value="APE_1794"/>
</dbReference>
<dbReference type="KEGG" id="ape:APE_1794"/>
<dbReference type="PATRIC" id="fig|272557.25.peg.1202"/>
<dbReference type="eggNOG" id="arCOG01527">
    <property type="taxonomic scope" value="Archaea"/>
</dbReference>
<dbReference type="Proteomes" id="UP000002518">
    <property type="component" value="Chromosome"/>
</dbReference>
<dbReference type="GO" id="GO:0003677">
    <property type="term" value="F:DNA binding"/>
    <property type="evidence" value="ECO:0007669"/>
    <property type="project" value="UniProtKB-KW"/>
</dbReference>
<dbReference type="GO" id="GO:0003917">
    <property type="term" value="F:DNA topoisomerase type I (single strand cut, ATP-independent) activity"/>
    <property type="evidence" value="ECO:0007669"/>
    <property type="project" value="UniProtKB-UniRule"/>
</dbReference>
<dbReference type="GO" id="GO:0008270">
    <property type="term" value="F:zinc ion binding"/>
    <property type="evidence" value="ECO:0007669"/>
    <property type="project" value="UniProtKB-KW"/>
</dbReference>
<dbReference type="GO" id="GO:0006310">
    <property type="term" value="P:DNA recombination"/>
    <property type="evidence" value="ECO:0007669"/>
    <property type="project" value="TreeGrafter"/>
</dbReference>
<dbReference type="GO" id="GO:0006281">
    <property type="term" value="P:DNA repair"/>
    <property type="evidence" value="ECO:0007669"/>
    <property type="project" value="TreeGrafter"/>
</dbReference>
<dbReference type="GO" id="GO:0006265">
    <property type="term" value="P:DNA topological change"/>
    <property type="evidence" value="ECO:0007669"/>
    <property type="project" value="UniProtKB-UniRule"/>
</dbReference>
<dbReference type="CDD" id="cd00186">
    <property type="entry name" value="TOP1Ac"/>
    <property type="match status" value="1"/>
</dbReference>
<dbReference type="Gene3D" id="3.40.50.140">
    <property type="match status" value="1"/>
</dbReference>
<dbReference type="Gene3D" id="1.10.460.10">
    <property type="entry name" value="Topoisomerase I, domain 2"/>
    <property type="match status" value="1"/>
</dbReference>
<dbReference type="Gene3D" id="2.70.20.10">
    <property type="entry name" value="Topoisomerase I, domain 3"/>
    <property type="match status" value="1"/>
</dbReference>
<dbReference type="Gene3D" id="1.10.290.10">
    <property type="entry name" value="Topoisomerase I, domain 4"/>
    <property type="match status" value="1"/>
</dbReference>
<dbReference type="HAMAP" id="MF_00952">
    <property type="entry name" value="Topoisom_1_prok"/>
    <property type="match status" value="1"/>
</dbReference>
<dbReference type="InterPro" id="IPR000380">
    <property type="entry name" value="Topo_IA"/>
</dbReference>
<dbReference type="InterPro" id="IPR003601">
    <property type="entry name" value="Topo_IA_2"/>
</dbReference>
<dbReference type="InterPro" id="IPR023406">
    <property type="entry name" value="Topo_IA_AS"/>
</dbReference>
<dbReference type="InterPro" id="IPR013497">
    <property type="entry name" value="Topo_IA_cen"/>
</dbReference>
<dbReference type="InterPro" id="IPR013824">
    <property type="entry name" value="Topo_IA_cen_sub1"/>
</dbReference>
<dbReference type="InterPro" id="IPR013825">
    <property type="entry name" value="Topo_IA_cen_sub2"/>
</dbReference>
<dbReference type="InterPro" id="IPR013826">
    <property type="entry name" value="Topo_IA_cen_sub3"/>
</dbReference>
<dbReference type="InterPro" id="IPR023405">
    <property type="entry name" value="Topo_IA_core_domain"/>
</dbReference>
<dbReference type="InterPro" id="IPR003602">
    <property type="entry name" value="Topo_IA_DNA-bd_dom"/>
</dbReference>
<dbReference type="InterPro" id="IPR005739">
    <property type="entry name" value="TopoI_arch"/>
</dbReference>
<dbReference type="InterPro" id="IPR028612">
    <property type="entry name" value="Topoisom_1_IA"/>
</dbReference>
<dbReference type="InterPro" id="IPR006171">
    <property type="entry name" value="TOPRIM_dom"/>
</dbReference>
<dbReference type="NCBIfam" id="NF004438">
    <property type="entry name" value="PRK05776.1"/>
    <property type="match status" value="1"/>
</dbReference>
<dbReference type="NCBIfam" id="TIGR01057">
    <property type="entry name" value="topA_arch"/>
    <property type="match status" value="1"/>
</dbReference>
<dbReference type="PANTHER" id="PTHR11390:SF26">
    <property type="entry name" value="DNA TOPOISOMERASE 1"/>
    <property type="match status" value="1"/>
</dbReference>
<dbReference type="PANTHER" id="PTHR11390">
    <property type="entry name" value="PROKARYOTIC DNA TOPOISOMERASE"/>
    <property type="match status" value="1"/>
</dbReference>
<dbReference type="Pfam" id="PF01131">
    <property type="entry name" value="Topoisom_bac"/>
    <property type="match status" value="1"/>
</dbReference>
<dbReference type="PRINTS" id="PR00417">
    <property type="entry name" value="PRTPISMRASEI"/>
</dbReference>
<dbReference type="SMART" id="SM00437">
    <property type="entry name" value="TOP1Ac"/>
    <property type="match status" value="1"/>
</dbReference>
<dbReference type="SMART" id="SM00436">
    <property type="entry name" value="TOP1Bc"/>
    <property type="match status" value="1"/>
</dbReference>
<dbReference type="SUPFAM" id="SSF56712">
    <property type="entry name" value="Prokaryotic type I DNA topoisomerase"/>
    <property type="match status" value="1"/>
</dbReference>
<dbReference type="PROSITE" id="PS00396">
    <property type="entry name" value="TOPO_IA_1"/>
    <property type="match status" value="1"/>
</dbReference>
<dbReference type="PROSITE" id="PS52039">
    <property type="entry name" value="TOPO_IA_2"/>
    <property type="match status" value="1"/>
</dbReference>
<dbReference type="PROSITE" id="PS50880">
    <property type="entry name" value="TOPRIM"/>
    <property type="match status" value="1"/>
</dbReference>
<name>TOP1_AERPE</name>
<feature type="chain" id="PRO_0000145176" description="DNA topoisomerase 1">
    <location>
        <begin position="1"/>
        <end position="673"/>
    </location>
</feature>
<feature type="domain" description="Toprim" evidence="1">
    <location>
        <begin position="1"/>
        <end position="134"/>
    </location>
</feature>
<feature type="domain" description="Topo IA-type catalytic" evidence="2">
    <location>
        <begin position="149"/>
        <end position="568"/>
    </location>
</feature>
<feature type="zinc finger region" description="C4-type">
    <location>
        <begin position="595"/>
        <end position="615"/>
    </location>
</feature>
<feature type="region of interest" description="Interaction with DNA" evidence="1">
    <location>
        <begin position="189"/>
        <end position="194"/>
    </location>
</feature>
<feature type="region of interest" description="Disordered" evidence="3">
    <location>
        <begin position="352"/>
        <end position="374"/>
    </location>
</feature>
<feature type="active site" description="O-(5'-phospho-DNA)-tyrosine intermediate" evidence="2">
    <location>
        <position position="311"/>
    </location>
</feature>
<feature type="binding site" evidence="1">
    <location>
        <position position="4"/>
    </location>
    <ligand>
        <name>Mg(2+)</name>
        <dbReference type="ChEBI" id="CHEBI:18420"/>
        <note>catalytic</note>
    </ligand>
</feature>
<feature type="binding site" evidence="1">
    <location>
        <position position="103"/>
    </location>
    <ligand>
        <name>Mg(2+)</name>
        <dbReference type="ChEBI" id="CHEBI:18420"/>
        <note>catalytic</note>
    </ligand>
</feature>
<feature type="site" description="Interaction with DNA" evidence="1">
    <location>
        <position position="55"/>
    </location>
</feature>
<feature type="site" description="Interaction with DNA" evidence="1">
    <location>
        <position position="159"/>
    </location>
</feature>
<feature type="site" description="Interaction with DNA" evidence="1">
    <location>
        <position position="163"/>
    </location>
</feature>
<feature type="site" description="Interaction with DNA" evidence="1">
    <location>
        <position position="313"/>
    </location>
</feature>
<feature type="site" description="Interaction with DNA" evidence="1">
    <location>
        <position position="501"/>
    </location>
</feature>
<organism>
    <name type="scientific">Aeropyrum pernix (strain ATCC 700893 / DSM 11879 / JCM 9820 / NBRC 100138 / K1)</name>
    <dbReference type="NCBI Taxonomy" id="272557"/>
    <lineage>
        <taxon>Archaea</taxon>
        <taxon>Thermoproteota</taxon>
        <taxon>Thermoprotei</taxon>
        <taxon>Desulfurococcales</taxon>
        <taxon>Desulfurococcaceae</taxon>
        <taxon>Aeropyrum</taxon>
    </lineage>
</organism>
<gene>
    <name evidence="1" type="primary">topA</name>
    <name type="ordered locus">APE_1794</name>
</gene>
<keyword id="KW-0238">DNA-binding</keyword>
<keyword id="KW-0413">Isomerase</keyword>
<keyword id="KW-0460">Magnesium</keyword>
<keyword id="KW-0479">Metal-binding</keyword>
<keyword id="KW-1185">Reference proteome</keyword>
<keyword id="KW-0799">Topoisomerase</keyword>
<keyword id="KW-0862">Zinc</keyword>
<keyword id="KW-0863">Zinc-finger</keyword>
<proteinExistence type="inferred from homology"/>
<accession>Q9YB01</accession>
<sequence length="673" mass="75571">MVAEKPKAAAKIAYALSDGRGVLRCSEYGVPYWIVRRDGAAIVVAPSAGHLFGPHTDSRGFPVFDFEWRPIFEFDRGAGYLSKFYRMLSRILPGASLYVNACDYDIEGSVIGFKIIEAFGDVNRARRMKFSTLAPQDIRRAYARMERLDVEMIEAGMARSEMDWLWGINVSRALMEAARRAAGRRVILSAGRVQSPTLVEAYRRWREINLHVPKASVAVKITAEKGGGVFDARPHGWKPQSLETARSIKSELRKNPWLAVEEVRSERSILRPPPAFNLGDLQKEANRILGLPPLRTQSIAEELYLEALISYPRTNSQKLPPSINYRAILDKLAHGPLGREARELLKETGGVLRPVQGSKDDPAHPAIHPTGEKPSQRLSKEHMAVYELIVRRFLAAFSREAIVSKSSVLLRDFQGRVWRAEGLRVEDLGWLKYYHYSTPGEKPMPPLDRGDKARVVRVDVRVEWSQTPVRLDKASLLRWMESVNIGTEGTRARIIETLYKRGYLEGSRKSEVTPLGEAVAVIIQTLFPELSKPDLTRRFESMIEDIRSGRRTRQEVIDMSKKTISKLLESFLDRLDTAVREIGVSLGSVEVEAACHLCGRKAVSAVSGYRLCSHHMEAFDRLRKALPNLASTISSTPREALEAIARGRSRAGAWVRDVAALALRDDGLYKALL</sequence>